<reference key="1">
    <citation type="submission" date="1999-02" db="EMBL/GenBank/DDBJ databases">
        <title>Structural analysis of Arabidopsis thaliana chromosome 5. XI.</title>
        <authorList>
            <person name="Kaneko T."/>
            <person name="Katoh T."/>
            <person name="Asamizu E."/>
            <person name="Sato S."/>
            <person name="Nakamura Y."/>
            <person name="Kotani H."/>
            <person name="Tabata S."/>
        </authorList>
    </citation>
    <scope>NUCLEOTIDE SEQUENCE [LARGE SCALE GENOMIC DNA]</scope>
    <source>
        <strain>cv. Columbia</strain>
    </source>
</reference>
<reference key="2">
    <citation type="journal article" date="2017" name="Plant J.">
        <title>Araport11: a complete reannotation of the Arabidopsis thaliana reference genome.</title>
        <authorList>
            <person name="Cheng C.Y."/>
            <person name="Krishnakumar V."/>
            <person name="Chan A.P."/>
            <person name="Thibaud-Nissen F."/>
            <person name="Schobel S."/>
            <person name="Town C.D."/>
        </authorList>
    </citation>
    <scope>GENOME REANNOTATION</scope>
    <source>
        <strain>cv. Columbia</strain>
    </source>
</reference>
<reference key="3">
    <citation type="journal article" date="2003" name="Plant Physiol.">
        <title>The fasciclin-like arabinogalactan proteins of Arabidopsis. A multigene family of putative cell adhesion molecules.</title>
        <authorList>
            <person name="Johnson K.L."/>
            <person name="Jones B.J."/>
            <person name="Bacic A."/>
            <person name="Schultz C.J."/>
        </authorList>
    </citation>
    <scope>GENE FAMILY ORGANIZATION</scope>
    <scope>NOMENCLATURE</scope>
</reference>
<protein>
    <recommendedName>
        <fullName>Putative fasciclin-like arabinogalactan protein 20</fullName>
    </recommendedName>
</protein>
<feature type="chain" id="PRO_0000253880" description="Putative fasciclin-like arabinogalactan protein 20">
    <location>
        <begin position="1"/>
        <end position="424"/>
    </location>
</feature>
<feature type="transmembrane region" description="Helical" evidence="1">
    <location>
        <begin position="46"/>
        <end position="66"/>
    </location>
</feature>
<feature type="domain" description="FAS1 1" evidence="2">
    <location>
        <begin position="56"/>
        <end position="194"/>
    </location>
</feature>
<feature type="domain" description="FAS1 2" evidence="2">
    <location>
        <begin position="250"/>
        <end position="384"/>
    </location>
</feature>
<feature type="region of interest" description="Disordered" evidence="3">
    <location>
        <begin position="199"/>
        <end position="246"/>
    </location>
</feature>
<feature type="region of interest" description="Disordered" evidence="3">
    <location>
        <begin position="405"/>
        <end position="424"/>
    </location>
</feature>
<feature type="compositionally biased region" description="Low complexity" evidence="3">
    <location>
        <begin position="199"/>
        <end position="226"/>
    </location>
</feature>
<feature type="compositionally biased region" description="Polar residues" evidence="3">
    <location>
        <begin position="227"/>
        <end position="246"/>
    </location>
</feature>
<feature type="glycosylation site" description="N-linked (GlcNAc...) asparagine" evidence="1">
    <location>
        <position position="153"/>
    </location>
</feature>
<feature type="glycosylation site" description="N-linked (GlcNAc...) asparagine" evidence="1">
    <location>
        <position position="160"/>
    </location>
</feature>
<feature type="glycosylation site" description="N-linked (GlcNAc...) asparagine" evidence="1">
    <location>
        <position position="246"/>
    </location>
</feature>
<feature type="glycosylation site" description="N-linked (GlcNAc...) asparagine" evidence="1">
    <location>
        <position position="283"/>
    </location>
</feature>
<feature type="glycosylation site" description="N-linked (GlcNAc...) asparagine" evidence="1">
    <location>
        <position position="287"/>
    </location>
</feature>
<accession>Q9FGW0</accession>
<proteinExistence type="inferred from homology"/>
<comment type="function">
    <text>May be a cell surface adhesion protein.</text>
</comment>
<comment type="subcellular location">
    <subcellularLocation>
        <location evidence="4">Membrane</location>
        <topology evidence="4">Single-pass membrane protein</topology>
    </subcellularLocation>
</comment>
<comment type="similarity">
    <text evidence="4">Belongs to the fasciclin-like AGP family.</text>
</comment>
<evidence type="ECO:0000255" key="1"/>
<evidence type="ECO:0000255" key="2">
    <source>
        <dbReference type="PROSITE-ProRule" id="PRU00082"/>
    </source>
</evidence>
<evidence type="ECO:0000256" key="3">
    <source>
        <dbReference type="SAM" id="MobiDB-lite"/>
    </source>
</evidence>
<evidence type="ECO:0000305" key="4"/>
<dbReference type="EMBL" id="AB023040">
    <property type="protein sequence ID" value="BAB10524.1"/>
    <property type="molecule type" value="Genomic_DNA"/>
</dbReference>
<dbReference type="EMBL" id="CP002688">
    <property type="protein sequence ID" value="AED94617.1"/>
    <property type="molecule type" value="Genomic_DNA"/>
</dbReference>
<dbReference type="RefSeq" id="NP_198910.1">
    <property type="nucleotide sequence ID" value="NM_123459.2"/>
</dbReference>
<dbReference type="SMR" id="Q9FGW0"/>
<dbReference type="STRING" id="3702.Q9FGW0"/>
<dbReference type="GlyCosmos" id="Q9FGW0">
    <property type="glycosylation" value="5 sites, No reported glycans"/>
</dbReference>
<dbReference type="GlyGen" id="Q9FGW0">
    <property type="glycosylation" value="5 sites"/>
</dbReference>
<dbReference type="PaxDb" id="3702-AT5G40940.1"/>
<dbReference type="ProteomicsDB" id="230516"/>
<dbReference type="EnsemblPlants" id="AT5G40940.1">
    <property type="protein sequence ID" value="AT5G40940.1"/>
    <property type="gene ID" value="AT5G40940"/>
</dbReference>
<dbReference type="GeneID" id="834095"/>
<dbReference type="Gramene" id="AT5G40940.1">
    <property type="protein sequence ID" value="AT5G40940.1"/>
    <property type="gene ID" value="AT5G40940"/>
</dbReference>
<dbReference type="KEGG" id="ath:AT5G40940"/>
<dbReference type="Araport" id="AT5G40940"/>
<dbReference type="TAIR" id="AT5G40940">
    <property type="gene designation" value="FLA20"/>
</dbReference>
<dbReference type="eggNOG" id="ENOG502RIKK">
    <property type="taxonomic scope" value="Eukaryota"/>
</dbReference>
<dbReference type="HOGENOM" id="CLU_817286_0_0_1"/>
<dbReference type="InParanoid" id="Q9FGW0"/>
<dbReference type="OMA" id="PEMYRGD"/>
<dbReference type="PhylomeDB" id="Q9FGW0"/>
<dbReference type="PRO" id="PR:Q9FGW0"/>
<dbReference type="Proteomes" id="UP000006548">
    <property type="component" value="Chromosome 5"/>
</dbReference>
<dbReference type="ExpressionAtlas" id="Q9FGW0">
    <property type="expression patterns" value="baseline and differential"/>
</dbReference>
<dbReference type="GO" id="GO:0016020">
    <property type="term" value="C:membrane"/>
    <property type="evidence" value="ECO:0007669"/>
    <property type="project" value="UniProtKB-SubCell"/>
</dbReference>
<dbReference type="Gene3D" id="2.30.180.10">
    <property type="entry name" value="FAS1 domain"/>
    <property type="match status" value="2"/>
</dbReference>
<dbReference type="InterPro" id="IPR036378">
    <property type="entry name" value="FAS1_dom_sf"/>
</dbReference>
<dbReference type="InterPro" id="IPR000782">
    <property type="entry name" value="FAS1_domain"/>
</dbReference>
<dbReference type="InterPro" id="IPR052806">
    <property type="entry name" value="Fasciclin-like_AGP"/>
</dbReference>
<dbReference type="PANTHER" id="PTHR33985:SF21">
    <property type="entry name" value="FASCICLIN-LIKE ARABINOGALACTAN PROTEIN 20-RELATED"/>
    <property type="match status" value="1"/>
</dbReference>
<dbReference type="PANTHER" id="PTHR33985">
    <property type="entry name" value="OS02G0491300 PROTEIN-RELATED"/>
    <property type="match status" value="1"/>
</dbReference>
<dbReference type="Pfam" id="PF02469">
    <property type="entry name" value="Fasciclin"/>
    <property type="match status" value="1"/>
</dbReference>
<dbReference type="SMART" id="SM00554">
    <property type="entry name" value="FAS1"/>
    <property type="match status" value="2"/>
</dbReference>
<dbReference type="SUPFAM" id="SSF82153">
    <property type="entry name" value="FAS1 domain"/>
    <property type="match status" value="2"/>
</dbReference>
<dbReference type="PROSITE" id="PS50213">
    <property type="entry name" value="FAS1"/>
    <property type="match status" value="1"/>
</dbReference>
<organism>
    <name type="scientific">Arabidopsis thaliana</name>
    <name type="common">Mouse-ear cress</name>
    <dbReference type="NCBI Taxonomy" id="3702"/>
    <lineage>
        <taxon>Eukaryota</taxon>
        <taxon>Viridiplantae</taxon>
        <taxon>Streptophyta</taxon>
        <taxon>Embryophyta</taxon>
        <taxon>Tracheophyta</taxon>
        <taxon>Spermatophyta</taxon>
        <taxon>Magnoliopsida</taxon>
        <taxon>eudicotyledons</taxon>
        <taxon>Gunneridae</taxon>
        <taxon>Pentapetalae</taxon>
        <taxon>rosids</taxon>
        <taxon>malvids</taxon>
        <taxon>Brassicales</taxon>
        <taxon>Brassicaceae</taxon>
        <taxon>Camelineae</taxon>
        <taxon>Arabidopsis</taxon>
    </lineage>
</organism>
<gene>
    <name type="primary">FLA20</name>
    <name type="ordered locus">At5g40940</name>
    <name type="ORF">MMG1.3</name>
</gene>
<name>FLA20_ARATH</name>
<sequence length="424" mass="46601">MNKKPSKYFPSLNRTDYKNCNFLCNGFSLKPNEKKSSKNASMASKLLTTFFLIFFVLDIDLVATSMTSVSSAVEVLSDSGYLSMGLTLKLANQDLNLEDWQELTLFAPSDQSFSKFGQPSLLDMKYQLSPTRLPGETLRNLPNGAKIPTLRSNYSLTVTNSSRFGGKTSINNVVVQDSPVFDDGYVVIYGSDEFFTSPTKISDDSSSSSSIPSTTSSTGSIPIPSSATQTPPSPNIASDSTRNLPNRSKPVNRFNIFESASRLLMSRGFVIIATFLALQLEDNTSGNDTKITVFAPIDEAIPNPTTKFSDYVTIFRGHVVSQLLLWKDLQKFAKEGSILQTVLKGYEIEISLSGDILLLNGVPLIYPDLYVNDWIAVHGFNQMIVTKEKQVDVGDSITVLNNGEQEEEGVHGEYSSELGDYGLH</sequence>
<keyword id="KW-0325">Glycoprotein</keyword>
<keyword id="KW-0472">Membrane</keyword>
<keyword id="KW-0654">Proteoglycan</keyword>
<keyword id="KW-1185">Reference proteome</keyword>
<keyword id="KW-0677">Repeat</keyword>
<keyword id="KW-0812">Transmembrane</keyword>
<keyword id="KW-1133">Transmembrane helix</keyword>